<reference key="1">
    <citation type="journal article" date="2006" name="Appl. Environ. Microbiol.">
        <title>Complete genome sequence of the marine, chemolithoautotrophic, ammonia-oxidizing bacterium Nitrosococcus oceani ATCC 19707.</title>
        <authorList>
            <person name="Klotz M.G."/>
            <person name="Arp D.J."/>
            <person name="Chain P.S.G."/>
            <person name="El-Sheikh A.F."/>
            <person name="Hauser L.J."/>
            <person name="Hommes N.G."/>
            <person name="Larimer F.W."/>
            <person name="Malfatti S.A."/>
            <person name="Norton J.M."/>
            <person name="Poret-Peterson A.T."/>
            <person name="Vergez L.M."/>
            <person name="Ward B.B."/>
        </authorList>
    </citation>
    <scope>NUCLEOTIDE SEQUENCE [LARGE SCALE GENOMIC DNA]</scope>
    <source>
        <strain>ATCC 19707 / BCRC 17464 / JCM 30415 / NCIMB 11848 / C-107</strain>
    </source>
</reference>
<evidence type="ECO:0000255" key="1">
    <source>
        <dbReference type="HAMAP-Rule" id="MF_01398"/>
    </source>
</evidence>
<proteinExistence type="inferred from homology"/>
<comment type="function">
    <text evidence="1">F(1)F(0) ATP synthase produces ATP from ADP in the presence of a proton or sodium gradient. F-type ATPases consist of two structural domains, F(1) containing the extramembraneous catalytic core and F(0) containing the membrane proton channel, linked together by a central stalk and a peripheral stalk. During catalysis, ATP synthesis in the catalytic domain of F(1) is coupled via a rotary mechanism of the central stalk subunits to proton translocation.</text>
</comment>
<comment type="function">
    <text evidence="1">Component of the F(0) channel, it forms part of the peripheral stalk, linking F(1) to F(0).</text>
</comment>
<comment type="subunit">
    <text evidence="1">F-type ATPases have 2 components, F(1) - the catalytic core - and F(0) - the membrane proton channel. F(1) has five subunits: alpha(3), beta(3), gamma(1), delta(1), epsilon(1). F(0) has three main subunits: a(1), b(2) and c(10-14). The alpha and beta chains form an alternating ring which encloses part of the gamma chain. F(1) is attached to F(0) by a central stalk formed by the gamma and epsilon chains, while a peripheral stalk is formed by the delta and b chains.</text>
</comment>
<comment type="subcellular location">
    <subcellularLocation>
        <location evidence="1">Cell inner membrane</location>
        <topology evidence="1">Single-pass membrane protein</topology>
    </subcellularLocation>
</comment>
<comment type="similarity">
    <text evidence="1">Belongs to the ATPase B chain family.</text>
</comment>
<name>ATPF_NITOC</name>
<keyword id="KW-0066">ATP synthesis</keyword>
<keyword id="KW-0997">Cell inner membrane</keyword>
<keyword id="KW-1003">Cell membrane</keyword>
<keyword id="KW-0138">CF(0)</keyword>
<keyword id="KW-0375">Hydrogen ion transport</keyword>
<keyword id="KW-0406">Ion transport</keyword>
<keyword id="KW-0472">Membrane</keyword>
<keyword id="KW-1185">Reference proteome</keyword>
<keyword id="KW-0812">Transmembrane</keyword>
<keyword id="KW-1133">Transmembrane helix</keyword>
<keyword id="KW-0813">Transport</keyword>
<protein>
    <recommendedName>
        <fullName evidence="1">ATP synthase subunit b</fullName>
    </recommendedName>
    <alternativeName>
        <fullName evidence="1">ATP synthase F(0) sector subunit b</fullName>
    </alternativeName>
    <alternativeName>
        <fullName evidence="1">ATPase subunit I</fullName>
    </alternativeName>
    <alternativeName>
        <fullName evidence="1">F-type ATPase subunit b</fullName>
        <shortName evidence="1">F-ATPase subunit b</shortName>
    </alternativeName>
</protein>
<accession>Q3J6M7</accession>
<gene>
    <name evidence="1" type="primary">atpF</name>
    <name type="ordered locus">Noc_3078</name>
</gene>
<sequence length="156" mass="17384">MNVTVTLIGQMVAFGILVWFVNRFLWGPLTNLMEERKKRVADGLAAAERGKHERELAEKRAKETLHEAKEKAAEIITQAQKRAGEIIEEAKEAAQAEGERLKVSANAEIQQEMNRAREDLRGQVVSIAVAGASKILKRELDEKANEALVKELVAQI</sequence>
<dbReference type="EMBL" id="CP000127">
    <property type="protein sequence ID" value="ABA59519.1"/>
    <property type="molecule type" value="Genomic_DNA"/>
</dbReference>
<dbReference type="RefSeq" id="WP_011331143.1">
    <property type="nucleotide sequence ID" value="NC_007484.1"/>
</dbReference>
<dbReference type="SMR" id="Q3J6M7"/>
<dbReference type="FunCoup" id="Q3J6M7">
    <property type="interactions" value="191"/>
</dbReference>
<dbReference type="STRING" id="323261.Noc_3078"/>
<dbReference type="KEGG" id="noc:Noc_3078"/>
<dbReference type="eggNOG" id="COG0711">
    <property type="taxonomic scope" value="Bacteria"/>
</dbReference>
<dbReference type="HOGENOM" id="CLU_079215_4_5_6"/>
<dbReference type="InParanoid" id="Q3J6M7"/>
<dbReference type="Proteomes" id="UP000006838">
    <property type="component" value="Chromosome"/>
</dbReference>
<dbReference type="GO" id="GO:0005886">
    <property type="term" value="C:plasma membrane"/>
    <property type="evidence" value="ECO:0007669"/>
    <property type="project" value="UniProtKB-SubCell"/>
</dbReference>
<dbReference type="GO" id="GO:0045259">
    <property type="term" value="C:proton-transporting ATP synthase complex"/>
    <property type="evidence" value="ECO:0007669"/>
    <property type="project" value="UniProtKB-KW"/>
</dbReference>
<dbReference type="GO" id="GO:0046933">
    <property type="term" value="F:proton-transporting ATP synthase activity, rotational mechanism"/>
    <property type="evidence" value="ECO:0007669"/>
    <property type="project" value="UniProtKB-UniRule"/>
</dbReference>
<dbReference type="GO" id="GO:0046961">
    <property type="term" value="F:proton-transporting ATPase activity, rotational mechanism"/>
    <property type="evidence" value="ECO:0007669"/>
    <property type="project" value="TreeGrafter"/>
</dbReference>
<dbReference type="CDD" id="cd06503">
    <property type="entry name" value="ATP-synt_Fo_b"/>
    <property type="match status" value="1"/>
</dbReference>
<dbReference type="FunFam" id="1.20.5.620:FF:000001">
    <property type="entry name" value="ATP synthase subunit b"/>
    <property type="match status" value="1"/>
</dbReference>
<dbReference type="Gene3D" id="1.20.5.620">
    <property type="entry name" value="F1F0 ATP synthase subunit B, membrane domain"/>
    <property type="match status" value="1"/>
</dbReference>
<dbReference type="HAMAP" id="MF_01398">
    <property type="entry name" value="ATP_synth_b_bprime"/>
    <property type="match status" value="1"/>
</dbReference>
<dbReference type="InterPro" id="IPR028987">
    <property type="entry name" value="ATP_synth_B-like_membr_sf"/>
</dbReference>
<dbReference type="InterPro" id="IPR002146">
    <property type="entry name" value="ATP_synth_b/b'su_bac/chlpt"/>
</dbReference>
<dbReference type="InterPro" id="IPR005864">
    <property type="entry name" value="ATP_synth_F0_bsu_bac"/>
</dbReference>
<dbReference type="InterPro" id="IPR050059">
    <property type="entry name" value="ATP_synthase_B_chain"/>
</dbReference>
<dbReference type="NCBIfam" id="TIGR01144">
    <property type="entry name" value="ATP_synt_b"/>
    <property type="match status" value="1"/>
</dbReference>
<dbReference type="NCBIfam" id="NF004411">
    <property type="entry name" value="PRK05759.1-2"/>
    <property type="match status" value="1"/>
</dbReference>
<dbReference type="PANTHER" id="PTHR33445:SF1">
    <property type="entry name" value="ATP SYNTHASE SUBUNIT B"/>
    <property type="match status" value="1"/>
</dbReference>
<dbReference type="PANTHER" id="PTHR33445">
    <property type="entry name" value="ATP SYNTHASE SUBUNIT B', CHLOROPLASTIC"/>
    <property type="match status" value="1"/>
</dbReference>
<dbReference type="Pfam" id="PF00430">
    <property type="entry name" value="ATP-synt_B"/>
    <property type="match status" value="1"/>
</dbReference>
<dbReference type="SUPFAM" id="SSF81573">
    <property type="entry name" value="F1F0 ATP synthase subunit B, membrane domain"/>
    <property type="match status" value="1"/>
</dbReference>
<feature type="chain" id="PRO_0000368628" description="ATP synthase subunit b">
    <location>
        <begin position="1"/>
        <end position="156"/>
    </location>
</feature>
<feature type="transmembrane region" description="Helical" evidence="1">
    <location>
        <begin position="1"/>
        <end position="21"/>
    </location>
</feature>
<organism>
    <name type="scientific">Nitrosococcus oceani (strain ATCC 19707 / BCRC 17464 / JCM 30415 / NCIMB 11848 / C-107)</name>
    <dbReference type="NCBI Taxonomy" id="323261"/>
    <lineage>
        <taxon>Bacteria</taxon>
        <taxon>Pseudomonadati</taxon>
        <taxon>Pseudomonadota</taxon>
        <taxon>Gammaproteobacteria</taxon>
        <taxon>Chromatiales</taxon>
        <taxon>Chromatiaceae</taxon>
        <taxon>Nitrosococcus</taxon>
    </lineage>
</organism>